<reference key="1">
    <citation type="submission" date="2008-08" db="EMBL/GenBank/DDBJ databases">
        <title>The complete genome sequence of Thermodesulfovibrio yellowstonii strain ATCC 51303 / DSM 11347 / YP87.</title>
        <authorList>
            <person name="Dodson R.J."/>
            <person name="Durkin A.S."/>
            <person name="Wu M."/>
            <person name="Eisen J."/>
            <person name="Sutton G."/>
        </authorList>
    </citation>
    <scope>NUCLEOTIDE SEQUENCE [LARGE SCALE GENOMIC DNA]</scope>
    <source>
        <strain>ATCC 51303 / DSM 11347 / YP87</strain>
    </source>
</reference>
<proteinExistence type="inferred from homology"/>
<protein>
    <recommendedName>
        <fullName evidence="1">ATP-dependent Clp protease ATP-binding subunit ClpX</fullName>
    </recommendedName>
</protein>
<comment type="function">
    <text evidence="1">ATP-dependent specificity component of the Clp protease. It directs the protease to specific substrates. Can perform chaperone functions in the absence of ClpP.</text>
</comment>
<comment type="subunit">
    <text evidence="1">Component of the ClpX-ClpP complex. Forms a hexameric ring that, in the presence of ATP, binds to fourteen ClpP subunits assembled into a disk-like structure with a central cavity, resembling the structure of eukaryotic proteasomes.</text>
</comment>
<comment type="similarity">
    <text evidence="1">Belongs to the ClpX chaperone family.</text>
</comment>
<sequence>MAKKNEETLRCSFCGKSQKEVKKLIAGNGVYICDECVSLCNEILEEERFEHLEGIKQDLPTPQEIHKFLNDYVIGQERAKKILSVAVYNHYKRIFKGTSSDEIQKSNIMLIGPTGTGKTLLAQTLAKFLDVPFAIADATTLTEAGYVGEDVENILLKLLQNANFDIQRAQIGIIYIDEIDKISRKSDSPSITRDVSGEGVQQALLKIVEGTLANIPPQGGRKHPQQEYIQLDTTNILFICGGAFVGLEEIIKKRIGKRTIGFLSETKKIDEENVLSQAEPEDLIKYGMIPEFVGRFPVVATLNQLDEDALIEILTKPKNALVKQYQKLFSIDGVKLTFTDDALRAIAKKAIERKTGARALRSILEDIMLDVMYLIPSERGINECIINEDVVNKKASPILIYKEKKVKHA</sequence>
<gene>
    <name evidence="1" type="primary">clpX</name>
    <name type="ordered locus">THEYE_A0256</name>
</gene>
<accession>B5YI39</accession>
<keyword id="KW-0067">ATP-binding</keyword>
<keyword id="KW-0143">Chaperone</keyword>
<keyword id="KW-0479">Metal-binding</keyword>
<keyword id="KW-0547">Nucleotide-binding</keyword>
<keyword id="KW-1185">Reference proteome</keyword>
<keyword id="KW-0862">Zinc</keyword>
<organism>
    <name type="scientific">Thermodesulfovibrio yellowstonii (strain ATCC 51303 / DSM 11347 / YP87)</name>
    <dbReference type="NCBI Taxonomy" id="289376"/>
    <lineage>
        <taxon>Bacteria</taxon>
        <taxon>Pseudomonadati</taxon>
        <taxon>Nitrospirota</taxon>
        <taxon>Thermodesulfovibrionia</taxon>
        <taxon>Thermodesulfovibrionales</taxon>
        <taxon>Thermodesulfovibrionaceae</taxon>
        <taxon>Thermodesulfovibrio</taxon>
    </lineage>
</organism>
<feature type="chain" id="PRO_1000123857" description="ATP-dependent Clp protease ATP-binding subunit ClpX">
    <location>
        <begin position="1"/>
        <end position="409"/>
    </location>
</feature>
<feature type="domain" description="ClpX-type ZB" evidence="2">
    <location>
        <begin position="1"/>
        <end position="52"/>
    </location>
</feature>
<feature type="binding site" evidence="2">
    <location>
        <position position="11"/>
    </location>
    <ligand>
        <name>Zn(2+)</name>
        <dbReference type="ChEBI" id="CHEBI:29105"/>
    </ligand>
</feature>
<feature type="binding site" evidence="2">
    <location>
        <position position="14"/>
    </location>
    <ligand>
        <name>Zn(2+)</name>
        <dbReference type="ChEBI" id="CHEBI:29105"/>
    </ligand>
</feature>
<feature type="binding site" evidence="2">
    <location>
        <position position="33"/>
    </location>
    <ligand>
        <name>Zn(2+)</name>
        <dbReference type="ChEBI" id="CHEBI:29105"/>
    </ligand>
</feature>
<feature type="binding site" evidence="2">
    <location>
        <position position="36"/>
    </location>
    <ligand>
        <name>Zn(2+)</name>
        <dbReference type="ChEBI" id="CHEBI:29105"/>
    </ligand>
</feature>
<feature type="binding site" evidence="1">
    <location>
        <begin position="113"/>
        <end position="120"/>
    </location>
    <ligand>
        <name>ATP</name>
        <dbReference type="ChEBI" id="CHEBI:30616"/>
    </ligand>
</feature>
<evidence type="ECO:0000255" key="1">
    <source>
        <dbReference type="HAMAP-Rule" id="MF_00175"/>
    </source>
</evidence>
<evidence type="ECO:0000255" key="2">
    <source>
        <dbReference type="PROSITE-ProRule" id="PRU01250"/>
    </source>
</evidence>
<dbReference type="EMBL" id="CP001147">
    <property type="protein sequence ID" value="ACI21821.1"/>
    <property type="molecule type" value="Genomic_DNA"/>
</dbReference>
<dbReference type="RefSeq" id="WP_012546526.1">
    <property type="nucleotide sequence ID" value="NC_011296.1"/>
</dbReference>
<dbReference type="RefSeq" id="YP_002248105.1">
    <property type="nucleotide sequence ID" value="NC_011296.1"/>
</dbReference>
<dbReference type="SMR" id="B5YI39"/>
<dbReference type="FunCoup" id="B5YI39">
    <property type="interactions" value="332"/>
</dbReference>
<dbReference type="STRING" id="289376.THEYE_A0256"/>
<dbReference type="EnsemblBacteria" id="ACI21821">
    <property type="protein sequence ID" value="ACI21821"/>
    <property type="gene ID" value="THEYE_A0256"/>
</dbReference>
<dbReference type="KEGG" id="tye:THEYE_A0256"/>
<dbReference type="PATRIC" id="fig|289376.4.peg.253"/>
<dbReference type="eggNOG" id="COG1219">
    <property type="taxonomic scope" value="Bacteria"/>
</dbReference>
<dbReference type="HOGENOM" id="CLU_014218_8_2_0"/>
<dbReference type="InParanoid" id="B5YI39"/>
<dbReference type="OrthoDB" id="9804062at2"/>
<dbReference type="Proteomes" id="UP000000718">
    <property type="component" value="Chromosome"/>
</dbReference>
<dbReference type="GO" id="GO:0009376">
    <property type="term" value="C:HslUV protease complex"/>
    <property type="evidence" value="ECO:0000318"/>
    <property type="project" value="GO_Central"/>
</dbReference>
<dbReference type="GO" id="GO:0005524">
    <property type="term" value="F:ATP binding"/>
    <property type="evidence" value="ECO:0000318"/>
    <property type="project" value="GO_Central"/>
</dbReference>
<dbReference type="GO" id="GO:0016887">
    <property type="term" value="F:ATP hydrolysis activity"/>
    <property type="evidence" value="ECO:0000318"/>
    <property type="project" value="GO_Central"/>
</dbReference>
<dbReference type="GO" id="GO:0140662">
    <property type="term" value="F:ATP-dependent protein folding chaperone"/>
    <property type="evidence" value="ECO:0007669"/>
    <property type="project" value="InterPro"/>
</dbReference>
<dbReference type="GO" id="GO:0046983">
    <property type="term" value="F:protein dimerization activity"/>
    <property type="evidence" value="ECO:0007669"/>
    <property type="project" value="InterPro"/>
</dbReference>
<dbReference type="GO" id="GO:0051082">
    <property type="term" value="F:unfolded protein binding"/>
    <property type="evidence" value="ECO:0007669"/>
    <property type="project" value="UniProtKB-UniRule"/>
</dbReference>
<dbReference type="GO" id="GO:0008270">
    <property type="term" value="F:zinc ion binding"/>
    <property type="evidence" value="ECO:0007669"/>
    <property type="project" value="InterPro"/>
</dbReference>
<dbReference type="GO" id="GO:0051301">
    <property type="term" value="P:cell division"/>
    <property type="evidence" value="ECO:0000318"/>
    <property type="project" value="GO_Central"/>
</dbReference>
<dbReference type="GO" id="GO:0051603">
    <property type="term" value="P:proteolysis involved in protein catabolic process"/>
    <property type="evidence" value="ECO:0000318"/>
    <property type="project" value="GO_Central"/>
</dbReference>
<dbReference type="CDD" id="cd19497">
    <property type="entry name" value="RecA-like_ClpX"/>
    <property type="match status" value="1"/>
</dbReference>
<dbReference type="FunFam" id="1.10.8.60:FF:000002">
    <property type="entry name" value="ATP-dependent Clp protease ATP-binding subunit ClpX"/>
    <property type="match status" value="1"/>
</dbReference>
<dbReference type="FunFam" id="3.40.50.300:FF:000005">
    <property type="entry name" value="ATP-dependent Clp protease ATP-binding subunit ClpX"/>
    <property type="match status" value="1"/>
</dbReference>
<dbReference type="Gene3D" id="1.10.8.60">
    <property type="match status" value="1"/>
</dbReference>
<dbReference type="Gene3D" id="6.20.220.10">
    <property type="entry name" value="ClpX chaperone, C4-type zinc finger domain"/>
    <property type="match status" value="1"/>
</dbReference>
<dbReference type="Gene3D" id="3.40.50.300">
    <property type="entry name" value="P-loop containing nucleotide triphosphate hydrolases"/>
    <property type="match status" value="1"/>
</dbReference>
<dbReference type="HAMAP" id="MF_00175">
    <property type="entry name" value="ClpX"/>
    <property type="match status" value="1"/>
</dbReference>
<dbReference type="InterPro" id="IPR003593">
    <property type="entry name" value="AAA+_ATPase"/>
</dbReference>
<dbReference type="InterPro" id="IPR050052">
    <property type="entry name" value="ATP-dep_Clp_protease_ClpX"/>
</dbReference>
<dbReference type="InterPro" id="IPR003959">
    <property type="entry name" value="ATPase_AAA_core"/>
</dbReference>
<dbReference type="InterPro" id="IPR019489">
    <property type="entry name" value="Clp_ATPase_C"/>
</dbReference>
<dbReference type="InterPro" id="IPR004487">
    <property type="entry name" value="Clp_protease_ATP-bd_su_ClpX"/>
</dbReference>
<dbReference type="InterPro" id="IPR046425">
    <property type="entry name" value="ClpX_bact"/>
</dbReference>
<dbReference type="InterPro" id="IPR027417">
    <property type="entry name" value="P-loop_NTPase"/>
</dbReference>
<dbReference type="InterPro" id="IPR010603">
    <property type="entry name" value="Znf_CppX_C4"/>
</dbReference>
<dbReference type="InterPro" id="IPR038366">
    <property type="entry name" value="Znf_CppX_C4_sf"/>
</dbReference>
<dbReference type="NCBIfam" id="TIGR00382">
    <property type="entry name" value="clpX"/>
    <property type="match status" value="1"/>
</dbReference>
<dbReference type="NCBIfam" id="NF003745">
    <property type="entry name" value="PRK05342.1"/>
    <property type="match status" value="1"/>
</dbReference>
<dbReference type="PANTHER" id="PTHR48102:SF7">
    <property type="entry name" value="ATP-DEPENDENT CLP PROTEASE ATP-BINDING SUBUNIT CLPX-LIKE, MITOCHONDRIAL"/>
    <property type="match status" value="1"/>
</dbReference>
<dbReference type="PANTHER" id="PTHR48102">
    <property type="entry name" value="ATP-DEPENDENT CLP PROTEASE ATP-BINDING SUBUNIT CLPX-LIKE, MITOCHONDRIAL-RELATED"/>
    <property type="match status" value="1"/>
</dbReference>
<dbReference type="Pfam" id="PF07724">
    <property type="entry name" value="AAA_2"/>
    <property type="match status" value="1"/>
</dbReference>
<dbReference type="Pfam" id="PF10431">
    <property type="entry name" value="ClpB_D2-small"/>
    <property type="match status" value="1"/>
</dbReference>
<dbReference type="Pfam" id="PF06689">
    <property type="entry name" value="zf-C4_ClpX"/>
    <property type="match status" value="1"/>
</dbReference>
<dbReference type="SMART" id="SM00382">
    <property type="entry name" value="AAA"/>
    <property type="match status" value="1"/>
</dbReference>
<dbReference type="SMART" id="SM01086">
    <property type="entry name" value="ClpB_D2-small"/>
    <property type="match status" value="1"/>
</dbReference>
<dbReference type="SMART" id="SM00994">
    <property type="entry name" value="zf-C4_ClpX"/>
    <property type="match status" value="1"/>
</dbReference>
<dbReference type="SUPFAM" id="SSF57716">
    <property type="entry name" value="Glucocorticoid receptor-like (DNA-binding domain)"/>
    <property type="match status" value="1"/>
</dbReference>
<dbReference type="SUPFAM" id="SSF52540">
    <property type="entry name" value="P-loop containing nucleoside triphosphate hydrolases"/>
    <property type="match status" value="1"/>
</dbReference>
<dbReference type="PROSITE" id="PS51902">
    <property type="entry name" value="CLPX_ZB"/>
    <property type="match status" value="1"/>
</dbReference>
<name>CLPX_THEYD</name>